<reference key="1">
    <citation type="journal article" date="2009" name="Science">
        <title>The dynamics and time scale of ongoing genomic erosion in symbiotic bacteria.</title>
        <authorList>
            <person name="Moran N.A."/>
            <person name="McLaughlin H.J."/>
            <person name="Sorek R."/>
        </authorList>
    </citation>
    <scope>NUCLEOTIDE SEQUENCE [LARGE SCALE GENOMIC DNA]</scope>
    <source>
        <strain>Tuc7</strain>
    </source>
</reference>
<accession>B8D6U4</accession>
<feature type="chain" id="PRO_1000186413" description="Bifunctional protein GlmU">
    <location>
        <begin position="1"/>
        <end position="459"/>
    </location>
</feature>
<feature type="region of interest" description="Pyrophosphorylase" evidence="1">
    <location>
        <begin position="1"/>
        <end position="229"/>
    </location>
</feature>
<feature type="region of interest" description="Linker" evidence="1">
    <location>
        <begin position="230"/>
        <end position="250"/>
    </location>
</feature>
<feature type="region of interest" description="N-acetyltransferase" evidence="1">
    <location>
        <begin position="251"/>
        <end position="459"/>
    </location>
</feature>
<feature type="active site" description="Proton acceptor" evidence="1">
    <location>
        <position position="363"/>
    </location>
</feature>
<feature type="binding site" evidence="1">
    <location>
        <begin position="11"/>
        <end position="14"/>
    </location>
    <ligand>
        <name>UDP-N-acetyl-alpha-D-glucosamine</name>
        <dbReference type="ChEBI" id="CHEBI:57705"/>
    </ligand>
</feature>
<feature type="binding site" evidence="1">
    <location>
        <position position="25"/>
    </location>
    <ligand>
        <name>UDP-N-acetyl-alpha-D-glucosamine</name>
        <dbReference type="ChEBI" id="CHEBI:57705"/>
    </ligand>
</feature>
<feature type="binding site" evidence="1">
    <location>
        <position position="76"/>
    </location>
    <ligand>
        <name>UDP-N-acetyl-alpha-D-glucosamine</name>
        <dbReference type="ChEBI" id="CHEBI:57705"/>
    </ligand>
</feature>
<feature type="binding site" evidence="1">
    <location>
        <begin position="81"/>
        <end position="82"/>
    </location>
    <ligand>
        <name>UDP-N-acetyl-alpha-D-glucosamine</name>
        <dbReference type="ChEBI" id="CHEBI:57705"/>
    </ligand>
</feature>
<feature type="binding site" evidence="1">
    <location>
        <begin position="103"/>
        <end position="105"/>
    </location>
    <ligand>
        <name>UDP-N-acetyl-alpha-D-glucosamine</name>
        <dbReference type="ChEBI" id="CHEBI:57705"/>
    </ligand>
</feature>
<feature type="binding site" evidence="1">
    <location>
        <position position="105"/>
    </location>
    <ligand>
        <name>Mg(2+)</name>
        <dbReference type="ChEBI" id="CHEBI:18420"/>
    </ligand>
</feature>
<feature type="binding site" evidence="1">
    <location>
        <position position="140"/>
    </location>
    <ligand>
        <name>UDP-N-acetyl-alpha-D-glucosamine</name>
        <dbReference type="ChEBI" id="CHEBI:57705"/>
    </ligand>
</feature>
<feature type="binding site" evidence="1">
    <location>
        <position position="154"/>
    </location>
    <ligand>
        <name>UDP-N-acetyl-alpha-D-glucosamine</name>
        <dbReference type="ChEBI" id="CHEBI:57705"/>
    </ligand>
</feature>
<feature type="binding site" evidence="1">
    <location>
        <position position="227"/>
    </location>
    <ligand>
        <name>Mg(2+)</name>
        <dbReference type="ChEBI" id="CHEBI:18420"/>
    </ligand>
</feature>
<feature type="binding site" evidence="1">
    <location>
        <position position="227"/>
    </location>
    <ligand>
        <name>UDP-N-acetyl-alpha-D-glucosamine</name>
        <dbReference type="ChEBI" id="CHEBI:57705"/>
    </ligand>
</feature>
<feature type="binding site" evidence="1">
    <location>
        <position position="333"/>
    </location>
    <ligand>
        <name>UDP-N-acetyl-alpha-D-glucosamine</name>
        <dbReference type="ChEBI" id="CHEBI:57705"/>
    </ligand>
</feature>
<feature type="binding site" evidence="1">
    <location>
        <position position="351"/>
    </location>
    <ligand>
        <name>UDP-N-acetyl-alpha-D-glucosamine</name>
        <dbReference type="ChEBI" id="CHEBI:57705"/>
    </ligand>
</feature>
<feature type="binding site" evidence="1">
    <location>
        <position position="366"/>
    </location>
    <ligand>
        <name>UDP-N-acetyl-alpha-D-glucosamine</name>
        <dbReference type="ChEBI" id="CHEBI:57705"/>
    </ligand>
</feature>
<feature type="binding site" evidence="1">
    <location>
        <position position="377"/>
    </location>
    <ligand>
        <name>UDP-N-acetyl-alpha-D-glucosamine</name>
        <dbReference type="ChEBI" id="CHEBI:57705"/>
    </ligand>
</feature>
<feature type="binding site" evidence="1">
    <location>
        <position position="380"/>
    </location>
    <ligand>
        <name>acetyl-CoA</name>
        <dbReference type="ChEBI" id="CHEBI:57288"/>
    </ligand>
</feature>
<feature type="binding site" evidence="1">
    <location>
        <begin position="386"/>
        <end position="387"/>
    </location>
    <ligand>
        <name>acetyl-CoA</name>
        <dbReference type="ChEBI" id="CHEBI:57288"/>
    </ligand>
</feature>
<feature type="binding site" evidence="1">
    <location>
        <position position="405"/>
    </location>
    <ligand>
        <name>acetyl-CoA</name>
        <dbReference type="ChEBI" id="CHEBI:57288"/>
    </ligand>
</feature>
<feature type="binding site" evidence="1">
    <location>
        <position position="423"/>
    </location>
    <ligand>
        <name>acetyl-CoA</name>
        <dbReference type="ChEBI" id="CHEBI:57288"/>
    </ligand>
</feature>
<gene>
    <name evidence="1" type="primary">glmU</name>
    <name type="ordered locus">BUAPTUC7_027</name>
</gene>
<sequence length="459" mass="51182">MLTQEIIIVILAAGKGTRMKSNHPKVLHFLGGKTILEHVIETAQSIKPKKIILVYSDQKKPVLSNIYNIPIQWIIQKKPQGTGHAILLAIKKISDNTEILVLYGDVPFISPVSIKKLQKSKKQSKISLLTAKVKNPNGYGRILRKKGKVISIIEDQDASNEQKNIKEIYSGIFIAQSKDLTRWLKKIDKKNEKQEFYATDIIALAHLEGSFIKTIEPLNYEEILGINNKLQLSNLEKIFQKKQINKLLINGVTIKDPSHFIFRGTLQHGQNVEIDTGVILENNVILGDDVKIGPGCIIRNSSIDSNTNIQAYTIIENSKIGKGCIIGPFAHLRSNTLLDRNVHIGNFVETKDTFIKNESKVKHLSYLGNSEIGSKVNIGAGSITCNYDGANKFKTIIGDNVLVGSNTQLIAPIKIAKNTTIAAGTTVTKDVNTPCLVYNTKEQKYKKNWMRSKKIIKKN</sequence>
<proteinExistence type="inferred from homology"/>
<keyword id="KW-0012">Acyltransferase</keyword>
<keyword id="KW-0133">Cell shape</keyword>
<keyword id="KW-0961">Cell wall biogenesis/degradation</keyword>
<keyword id="KW-0963">Cytoplasm</keyword>
<keyword id="KW-0460">Magnesium</keyword>
<keyword id="KW-0479">Metal-binding</keyword>
<keyword id="KW-0511">Multifunctional enzyme</keyword>
<keyword id="KW-0548">Nucleotidyltransferase</keyword>
<keyword id="KW-0573">Peptidoglycan synthesis</keyword>
<keyword id="KW-0677">Repeat</keyword>
<keyword id="KW-0808">Transferase</keyword>
<comment type="function">
    <text evidence="1">Catalyzes the last two sequential reactions in the de novo biosynthetic pathway for UDP-N-acetylglucosamine (UDP-GlcNAc). The C-terminal domain catalyzes the transfer of acetyl group from acetyl coenzyme A to glucosamine-1-phosphate (GlcN-1-P) to produce N-acetylglucosamine-1-phosphate (GlcNAc-1-P), which is converted into UDP-GlcNAc by the transfer of uridine 5-monophosphate (from uridine 5-triphosphate), a reaction catalyzed by the N-terminal domain.</text>
</comment>
<comment type="catalytic activity">
    <reaction evidence="1">
        <text>alpha-D-glucosamine 1-phosphate + acetyl-CoA = N-acetyl-alpha-D-glucosamine 1-phosphate + CoA + H(+)</text>
        <dbReference type="Rhea" id="RHEA:13725"/>
        <dbReference type="ChEBI" id="CHEBI:15378"/>
        <dbReference type="ChEBI" id="CHEBI:57287"/>
        <dbReference type="ChEBI" id="CHEBI:57288"/>
        <dbReference type="ChEBI" id="CHEBI:57776"/>
        <dbReference type="ChEBI" id="CHEBI:58516"/>
        <dbReference type="EC" id="2.3.1.157"/>
    </reaction>
</comment>
<comment type="catalytic activity">
    <reaction evidence="1">
        <text>N-acetyl-alpha-D-glucosamine 1-phosphate + UTP + H(+) = UDP-N-acetyl-alpha-D-glucosamine + diphosphate</text>
        <dbReference type="Rhea" id="RHEA:13509"/>
        <dbReference type="ChEBI" id="CHEBI:15378"/>
        <dbReference type="ChEBI" id="CHEBI:33019"/>
        <dbReference type="ChEBI" id="CHEBI:46398"/>
        <dbReference type="ChEBI" id="CHEBI:57705"/>
        <dbReference type="ChEBI" id="CHEBI:57776"/>
        <dbReference type="EC" id="2.7.7.23"/>
    </reaction>
</comment>
<comment type="cofactor">
    <cofactor evidence="1">
        <name>Mg(2+)</name>
        <dbReference type="ChEBI" id="CHEBI:18420"/>
    </cofactor>
    <text evidence="1">Binds 1 Mg(2+) ion per subunit.</text>
</comment>
<comment type="pathway">
    <text evidence="1">Nucleotide-sugar biosynthesis; UDP-N-acetyl-alpha-D-glucosamine biosynthesis; N-acetyl-alpha-D-glucosamine 1-phosphate from alpha-D-glucosamine 6-phosphate (route II): step 2/2.</text>
</comment>
<comment type="pathway">
    <text evidence="1">Nucleotide-sugar biosynthesis; UDP-N-acetyl-alpha-D-glucosamine biosynthesis; UDP-N-acetyl-alpha-D-glucosamine from N-acetyl-alpha-D-glucosamine 1-phosphate: step 1/1.</text>
</comment>
<comment type="pathway">
    <text evidence="1">Bacterial outer membrane biogenesis; LPS lipid A biosynthesis.</text>
</comment>
<comment type="subunit">
    <text evidence="1">Homotrimer.</text>
</comment>
<comment type="subcellular location">
    <subcellularLocation>
        <location evidence="1">Cytoplasm</location>
    </subcellularLocation>
</comment>
<comment type="similarity">
    <text evidence="1">In the N-terminal section; belongs to the N-acetylglucosamine-1-phosphate uridyltransferase family.</text>
</comment>
<comment type="similarity">
    <text evidence="1">In the C-terminal section; belongs to the transferase hexapeptide repeat family.</text>
</comment>
<organism>
    <name type="scientific">Buchnera aphidicola subsp. Acyrthosiphon pisum (strain Tuc7)</name>
    <dbReference type="NCBI Taxonomy" id="561501"/>
    <lineage>
        <taxon>Bacteria</taxon>
        <taxon>Pseudomonadati</taxon>
        <taxon>Pseudomonadota</taxon>
        <taxon>Gammaproteobacteria</taxon>
        <taxon>Enterobacterales</taxon>
        <taxon>Erwiniaceae</taxon>
        <taxon>Buchnera</taxon>
    </lineage>
</organism>
<name>GLMU_BUCAT</name>
<protein>
    <recommendedName>
        <fullName evidence="1">Bifunctional protein GlmU</fullName>
    </recommendedName>
    <domain>
        <recommendedName>
            <fullName evidence="1">UDP-N-acetylglucosamine pyrophosphorylase</fullName>
            <ecNumber evidence="1">2.7.7.23</ecNumber>
        </recommendedName>
        <alternativeName>
            <fullName evidence="1">N-acetylglucosamine-1-phosphate uridyltransferase</fullName>
        </alternativeName>
    </domain>
    <domain>
        <recommendedName>
            <fullName evidence="1">Glucosamine-1-phosphate N-acetyltransferase</fullName>
            <ecNumber evidence="1">2.3.1.157</ecNumber>
        </recommendedName>
    </domain>
</protein>
<dbReference type="EC" id="2.7.7.23" evidence="1"/>
<dbReference type="EC" id="2.3.1.157" evidence="1"/>
<dbReference type="EMBL" id="CP001158">
    <property type="protein sequence ID" value="ACL29859.1"/>
    <property type="molecule type" value="Genomic_DNA"/>
</dbReference>
<dbReference type="RefSeq" id="WP_009873988.1">
    <property type="nucleotide sequence ID" value="NC_011834.1"/>
</dbReference>
<dbReference type="SMR" id="B8D6U4"/>
<dbReference type="KEGG" id="bau:BUAPTUC7_027"/>
<dbReference type="HOGENOM" id="CLU_029499_15_2_6"/>
<dbReference type="UniPathway" id="UPA00113">
    <property type="reaction ID" value="UER00532"/>
</dbReference>
<dbReference type="UniPathway" id="UPA00113">
    <property type="reaction ID" value="UER00533"/>
</dbReference>
<dbReference type="UniPathway" id="UPA00973"/>
<dbReference type="GO" id="GO:0005737">
    <property type="term" value="C:cytoplasm"/>
    <property type="evidence" value="ECO:0007669"/>
    <property type="project" value="UniProtKB-SubCell"/>
</dbReference>
<dbReference type="GO" id="GO:0016020">
    <property type="term" value="C:membrane"/>
    <property type="evidence" value="ECO:0007669"/>
    <property type="project" value="GOC"/>
</dbReference>
<dbReference type="GO" id="GO:0019134">
    <property type="term" value="F:glucosamine-1-phosphate N-acetyltransferase activity"/>
    <property type="evidence" value="ECO:0007669"/>
    <property type="project" value="UniProtKB-UniRule"/>
</dbReference>
<dbReference type="GO" id="GO:0000287">
    <property type="term" value="F:magnesium ion binding"/>
    <property type="evidence" value="ECO:0007669"/>
    <property type="project" value="UniProtKB-UniRule"/>
</dbReference>
<dbReference type="GO" id="GO:0003977">
    <property type="term" value="F:UDP-N-acetylglucosamine diphosphorylase activity"/>
    <property type="evidence" value="ECO:0007669"/>
    <property type="project" value="UniProtKB-UniRule"/>
</dbReference>
<dbReference type="GO" id="GO:0000902">
    <property type="term" value="P:cell morphogenesis"/>
    <property type="evidence" value="ECO:0007669"/>
    <property type="project" value="UniProtKB-UniRule"/>
</dbReference>
<dbReference type="GO" id="GO:0071555">
    <property type="term" value="P:cell wall organization"/>
    <property type="evidence" value="ECO:0007669"/>
    <property type="project" value="UniProtKB-KW"/>
</dbReference>
<dbReference type="GO" id="GO:0009245">
    <property type="term" value="P:lipid A biosynthetic process"/>
    <property type="evidence" value="ECO:0007669"/>
    <property type="project" value="UniProtKB-UniRule"/>
</dbReference>
<dbReference type="GO" id="GO:0009252">
    <property type="term" value="P:peptidoglycan biosynthetic process"/>
    <property type="evidence" value="ECO:0007669"/>
    <property type="project" value="UniProtKB-UniRule"/>
</dbReference>
<dbReference type="GO" id="GO:0008360">
    <property type="term" value="P:regulation of cell shape"/>
    <property type="evidence" value="ECO:0007669"/>
    <property type="project" value="UniProtKB-KW"/>
</dbReference>
<dbReference type="GO" id="GO:0006048">
    <property type="term" value="P:UDP-N-acetylglucosamine biosynthetic process"/>
    <property type="evidence" value="ECO:0007669"/>
    <property type="project" value="UniProtKB-UniPathway"/>
</dbReference>
<dbReference type="CDD" id="cd02540">
    <property type="entry name" value="GT2_GlmU_N_bac"/>
    <property type="match status" value="1"/>
</dbReference>
<dbReference type="CDD" id="cd03353">
    <property type="entry name" value="LbH_GlmU_C"/>
    <property type="match status" value="1"/>
</dbReference>
<dbReference type="Gene3D" id="2.160.10.10">
    <property type="entry name" value="Hexapeptide repeat proteins"/>
    <property type="match status" value="1"/>
</dbReference>
<dbReference type="Gene3D" id="3.90.550.10">
    <property type="entry name" value="Spore Coat Polysaccharide Biosynthesis Protein SpsA, Chain A"/>
    <property type="match status" value="1"/>
</dbReference>
<dbReference type="HAMAP" id="MF_01631">
    <property type="entry name" value="GlmU"/>
    <property type="match status" value="1"/>
</dbReference>
<dbReference type="InterPro" id="IPR005882">
    <property type="entry name" value="Bifunctional_GlmU"/>
</dbReference>
<dbReference type="InterPro" id="IPR050065">
    <property type="entry name" value="GlmU-like"/>
</dbReference>
<dbReference type="InterPro" id="IPR038009">
    <property type="entry name" value="GlmU_C_LbH"/>
</dbReference>
<dbReference type="InterPro" id="IPR001451">
    <property type="entry name" value="Hexapep"/>
</dbReference>
<dbReference type="InterPro" id="IPR018357">
    <property type="entry name" value="Hexapep_transf_CS"/>
</dbReference>
<dbReference type="InterPro" id="IPR025877">
    <property type="entry name" value="MobA-like_NTP_Trfase"/>
</dbReference>
<dbReference type="InterPro" id="IPR029044">
    <property type="entry name" value="Nucleotide-diphossugar_trans"/>
</dbReference>
<dbReference type="InterPro" id="IPR011004">
    <property type="entry name" value="Trimer_LpxA-like_sf"/>
</dbReference>
<dbReference type="NCBIfam" id="TIGR01173">
    <property type="entry name" value="glmU"/>
    <property type="match status" value="1"/>
</dbReference>
<dbReference type="PANTHER" id="PTHR43584:SF3">
    <property type="entry name" value="BIFUNCTIONAL PROTEIN GLMU"/>
    <property type="match status" value="1"/>
</dbReference>
<dbReference type="PANTHER" id="PTHR43584">
    <property type="entry name" value="NUCLEOTIDYL TRANSFERASE"/>
    <property type="match status" value="1"/>
</dbReference>
<dbReference type="Pfam" id="PF00132">
    <property type="entry name" value="Hexapep"/>
    <property type="match status" value="3"/>
</dbReference>
<dbReference type="Pfam" id="PF12804">
    <property type="entry name" value="NTP_transf_3"/>
    <property type="match status" value="1"/>
</dbReference>
<dbReference type="SUPFAM" id="SSF53448">
    <property type="entry name" value="Nucleotide-diphospho-sugar transferases"/>
    <property type="match status" value="1"/>
</dbReference>
<dbReference type="SUPFAM" id="SSF51161">
    <property type="entry name" value="Trimeric LpxA-like enzymes"/>
    <property type="match status" value="1"/>
</dbReference>
<dbReference type="PROSITE" id="PS00101">
    <property type="entry name" value="HEXAPEP_TRANSFERASES"/>
    <property type="match status" value="1"/>
</dbReference>
<evidence type="ECO:0000255" key="1">
    <source>
        <dbReference type="HAMAP-Rule" id="MF_01631"/>
    </source>
</evidence>